<proteinExistence type="inferred from homology"/>
<comment type="catalytic activity">
    <reaction evidence="1">
        <text>N-(5-phospho-beta-D-ribosyl)anthranilate = 1-(2-carboxyphenylamino)-1-deoxy-D-ribulose 5-phosphate</text>
        <dbReference type="Rhea" id="RHEA:21540"/>
        <dbReference type="ChEBI" id="CHEBI:18277"/>
        <dbReference type="ChEBI" id="CHEBI:58613"/>
        <dbReference type="EC" id="5.3.1.24"/>
    </reaction>
</comment>
<comment type="pathway">
    <text evidence="1">Amino-acid biosynthesis; L-tryptophan biosynthesis; L-tryptophan from chorismate: step 3/5.</text>
</comment>
<comment type="similarity">
    <text evidence="1">Belongs to the TrpF family.</text>
</comment>
<feature type="chain" id="PRO_0000154368" description="N-(5'-phosphoribosyl)anthranilate isomerase">
    <location>
        <begin position="1"/>
        <end position="204"/>
    </location>
</feature>
<protein>
    <recommendedName>
        <fullName evidence="1">N-(5'-phosphoribosyl)anthranilate isomerase</fullName>
        <shortName evidence="1">PRAI</shortName>
        <ecNumber evidence="1">5.3.1.24</ecNumber>
    </recommendedName>
</protein>
<dbReference type="EC" id="5.3.1.24" evidence="1"/>
<dbReference type="EMBL" id="BA000028">
    <property type="protein sequence ID" value="BAC12479.1"/>
    <property type="molecule type" value="Genomic_DNA"/>
</dbReference>
<dbReference type="RefSeq" id="WP_011064926.1">
    <property type="nucleotide sequence ID" value="NC_004193.1"/>
</dbReference>
<dbReference type="SMR" id="Q8ESU3"/>
<dbReference type="STRING" id="221109.gene:10732727"/>
<dbReference type="KEGG" id="oih:OB0523"/>
<dbReference type="eggNOG" id="COG0135">
    <property type="taxonomic scope" value="Bacteria"/>
</dbReference>
<dbReference type="HOGENOM" id="CLU_076364_1_0_9"/>
<dbReference type="OrthoDB" id="9786954at2"/>
<dbReference type="PhylomeDB" id="Q8ESU3"/>
<dbReference type="UniPathway" id="UPA00035">
    <property type="reaction ID" value="UER00042"/>
</dbReference>
<dbReference type="Proteomes" id="UP000000822">
    <property type="component" value="Chromosome"/>
</dbReference>
<dbReference type="GO" id="GO:0004640">
    <property type="term" value="F:phosphoribosylanthranilate isomerase activity"/>
    <property type="evidence" value="ECO:0007669"/>
    <property type="project" value="UniProtKB-UniRule"/>
</dbReference>
<dbReference type="GO" id="GO:0000162">
    <property type="term" value="P:L-tryptophan biosynthetic process"/>
    <property type="evidence" value="ECO:0007669"/>
    <property type="project" value="UniProtKB-UniRule"/>
</dbReference>
<dbReference type="CDD" id="cd00405">
    <property type="entry name" value="PRAI"/>
    <property type="match status" value="1"/>
</dbReference>
<dbReference type="FunFam" id="3.20.20.70:FF:000075">
    <property type="entry name" value="Tryptophan biosynthesis protein TRP1"/>
    <property type="match status" value="1"/>
</dbReference>
<dbReference type="Gene3D" id="3.20.20.70">
    <property type="entry name" value="Aldolase class I"/>
    <property type="match status" value="1"/>
</dbReference>
<dbReference type="HAMAP" id="MF_00135">
    <property type="entry name" value="PRAI"/>
    <property type="match status" value="1"/>
</dbReference>
<dbReference type="InterPro" id="IPR013785">
    <property type="entry name" value="Aldolase_TIM"/>
</dbReference>
<dbReference type="InterPro" id="IPR001240">
    <property type="entry name" value="PRAI_dom"/>
</dbReference>
<dbReference type="InterPro" id="IPR011060">
    <property type="entry name" value="RibuloseP-bd_barrel"/>
</dbReference>
<dbReference type="InterPro" id="IPR044643">
    <property type="entry name" value="TrpF_fam"/>
</dbReference>
<dbReference type="NCBIfam" id="NF002300">
    <property type="entry name" value="PRK01222.1-7"/>
    <property type="match status" value="1"/>
</dbReference>
<dbReference type="NCBIfam" id="NF002302">
    <property type="entry name" value="PRK01222.2-2"/>
    <property type="match status" value="1"/>
</dbReference>
<dbReference type="PANTHER" id="PTHR42894">
    <property type="entry name" value="N-(5'-PHOSPHORIBOSYL)ANTHRANILATE ISOMERASE"/>
    <property type="match status" value="1"/>
</dbReference>
<dbReference type="PANTHER" id="PTHR42894:SF1">
    <property type="entry name" value="N-(5'-PHOSPHORIBOSYL)ANTHRANILATE ISOMERASE"/>
    <property type="match status" value="1"/>
</dbReference>
<dbReference type="Pfam" id="PF00697">
    <property type="entry name" value="PRAI"/>
    <property type="match status" value="1"/>
</dbReference>
<dbReference type="SUPFAM" id="SSF51366">
    <property type="entry name" value="Ribulose-phoshate binding barrel"/>
    <property type="match status" value="1"/>
</dbReference>
<evidence type="ECO:0000255" key="1">
    <source>
        <dbReference type="HAMAP-Rule" id="MF_00135"/>
    </source>
</evidence>
<sequence length="204" mass="22232">MFVKICGITSIDTAQAVVDANADMIGFVFAPSKRQLSTSLAEEIANTLPQTIQKVGVFVDEPLENILSIIERVNLDIVQLHGDESIDYQKRIPIPIIKAFPATTEGLNQANQSSAKYILIDSPPLQSSRGGNGVTFNWNILKDQPFTSKLILAGGLNTENIREAIKTVNPAGVDVSSGVETNGKKDAKKIQQFITNVQRKDVLR</sequence>
<organism>
    <name type="scientific">Oceanobacillus iheyensis (strain DSM 14371 / CIP 107618 / JCM 11309 / KCTC 3954 / HTE831)</name>
    <dbReference type="NCBI Taxonomy" id="221109"/>
    <lineage>
        <taxon>Bacteria</taxon>
        <taxon>Bacillati</taxon>
        <taxon>Bacillota</taxon>
        <taxon>Bacilli</taxon>
        <taxon>Bacillales</taxon>
        <taxon>Bacillaceae</taxon>
        <taxon>Oceanobacillus</taxon>
    </lineage>
</organism>
<name>TRPF_OCEIH</name>
<reference key="1">
    <citation type="journal article" date="2002" name="Nucleic Acids Res.">
        <title>Genome sequence of Oceanobacillus iheyensis isolated from the Iheya Ridge and its unexpected adaptive capabilities to extreme environments.</title>
        <authorList>
            <person name="Takami H."/>
            <person name="Takaki Y."/>
            <person name="Uchiyama I."/>
        </authorList>
    </citation>
    <scope>NUCLEOTIDE SEQUENCE [LARGE SCALE GENOMIC DNA]</scope>
    <source>
        <strain>DSM 14371 / CIP 107618 / JCM 11309 / KCTC 3954 / HTE831</strain>
    </source>
</reference>
<accession>Q8ESU3</accession>
<keyword id="KW-0028">Amino-acid biosynthesis</keyword>
<keyword id="KW-0057">Aromatic amino acid biosynthesis</keyword>
<keyword id="KW-0413">Isomerase</keyword>
<keyword id="KW-1185">Reference proteome</keyword>
<keyword id="KW-0822">Tryptophan biosynthesis</keyword>
<gene>
    <name evidence="1" type="primary">trpF</name>
    <name type="ordered locus">OB0523</name>
</gene>